<gene>
    <name evidence="1" type="primary">era</name>
    <name type="ordered locus">SCH_2575</name>
</gene>
<name>ERA_SALCH</name>
<accession>Q57LD1</accession>
<comment type="function">
    <text evidence="1">An essential GTPase that binds both GDP and GTP, with rapid nucleotide exchange. Plays a role in 16S rRNA processing and 30S ribosomal subunit biogenesis and possibly also in cell cycle regulation and energy metabolism.</text>
</comment>
<comment type="subunit">
    <text evidence="1">Monomer.</text>
</comment>
<comment type="subcellular location">
    <subcellularLocation>
        <location>Cytoplasm</location>
    </subcellularLocation>
    <subcellularLocation>
        <location evidence="1">Cell inner membrane</location>
        <topology evidence="1">Peripheral membrane protein</topology>
    </subcellularLocation>
</comment>
<comment type="similarity">
    <text evidence="1 2">Belongs to the TRAFAC class TrmE-Era-EngA-EngB-Septin-like GTPase superfamily. Era GTPase family.</text>
</comment>
<keyword id="KW-0997">Cell inner membrane</keyword>
<keyword id="KW-1003">Cell membrane</keyword>
<keyword id="KW-0963">Cytoplasm</keyword>
<keyword id="KW-0342">GTP-binding</keyword>
<keyword id="KW-0472">Membrane</keyword>
<keyword id="KW-0547">Nucleotide-binding</keyword>
<keyword id="KW-0690">Ribosome biogenesis</keyword>
<keyword id="KW-0694">RNA-binding</keyword>
<keyword id="KW-0699">rRNA-binding</keyword>
<dbReference type="EMBL" id="AE017220">
    <property type="protein sequence ID" value="AAX66481.1"/>
    <property type="molecule type" value="Genomic_DNA"/>
</dbReference>
<dbReference type="RefSeq" id="WP_000102230.1">
    <property type="nucleotide sequence ID" value="NC_006905.1"/>
</dbReference>
<dbReference type="SMR" id="Q57LD1"/>
<dbReference type="KEGG" id="sec:SCH_2575"/>
<dbReference type="HOGENOM" id="CLU_038009_1_2_6"/>
<dbReference type="Proteomes" id="UP000000538">
    <property type="component" value="Chromosome"/>
</dbReference>
<dbReference type="GO" id="GO:0005829">
    <property type="term" value="C:cytosol"/>
    <property type="evidence" value="ECO:0007669"/>
    <property type="project" value="TreeGrafter"/>
</dbReference>
<dbReference type="GO" id="GO:0005886">
    <property type="term" value="C:plasma membrane"/>
    <property type="evidence" value="ECO:0007669"/>
    <property type="project" value="UniProtKB-SubCell"/>
</dbReference>
<dbReference type="GO" id="GO:0005525">
    <property type="term" value="F:GTP binding"/>
    <property type="evidence" value="ECO:0007669"/>
    <property type="project" value="UniProtKB-UniRule"/>
</dbReference>
<dbReference type="GO" id="GO:0003924">
    <property type="term" value="F:GTPase activity"/>
    <property type="evidence" value="ECO:0007669"/>
    <property type="project" value="UniProtKB-UniRule"/>
</dbReference>
<dbReference type="GO" id="GO:0043024">
    <property type="term" value="F:ribosomal small subunit binding"/>
    <property type="evidence" value="ECO:0007669"/>
    <property type="project" value="TreeGrafter"/>
</dbReference>
<dbReference type="GO" id="GO:0070181">
    <property type="term" value="F:small ribosomal subunit rRNA binding"/>
    <property type="evidence" value="ECO:0007669"/>
    <property type="project" value="UniProtKB-UniRule"/>
</dbReference>
<dbReference type="GO" id="GO:0000028">
    <property type="term" value="P:ribosomal small subunit assembly"/>
    <property type="evidence" value="ECO:0007669"/>
    <property type="project" value="TreeGrafter"/>
</dbReference>
<dbReference type="CDD" id="cd04163">
    <property type="entry name" value="Era"/>
    <property type="match status" value="1"/>
</dbReference>
<dbReference type="CDD" id="cd22534">
    <property type="entry name" value="KH-II_Era"/>
    <property type="match status" value="1"/>
</dbReference>
<dbReference type="FunFam" id="3.30.300.20:FF:000003">
    <property type="entry name" value="GTPase Era"/>
    <property type="match status" value="1"/>
</dbReference>
<dbReference type="FunFam" id="3.40.50.300:FF:000094">
    <property type="entry name" value="GTPase Era"/>
    <property type="match status" value="1"/>
</dbReference>
<dbReference type="Gene3D" id="3.30.300.20">
    <property type="match status" value="1"/>
</dbReference>
<dbReference type="Gene3D" id="3.40.50.300">
    <property type="entry name" value="P-loop containing nucleotide triphosphate hydrolases"/>
    <property type="match status" value="1"/>
</dbReference>
<dbReference type="HAMAP" id="MF_00367">
    <property type="entry name" value="GTPase_Era"/>
    <property type="match status" value="1"/>
</dbReference>
<dbReference type="InterPro" id="IPR030388">
    <property type="entry name" value="G_ERA_dom"/>
</dbReference>
<dbReference type="InterPro" id="IPR006073">
    <property type="entry name" value="GTP-bd"/>
</dbReference>
<dbReference type="InterPro" id="IPR005662">
    <property type="entry name" value="GTPase_Era-like"/>
</dbReference>
<dbReference type="InterPro" id="IPR015946">
    <property type="entry name" value="KH_dom-like_a/b"/>
</dbReference>
<dbReference type="InterPro" id="IPR004044">
    <property type="entry name" value="KH_dom_type_2"/>
</dbReference>
<dbReference type="InterPro" id="IPR009019">
    <property type="entry name" value="KH_sf_prok-type"/>
</dbReference>
<dbReference type="InterPro" id="IPR027417">
    <property type="entry name" value="P-loop_NTPase"/>
</dbReference>
<dbReference type="InterPro" id="IPR005225">
    <property type="entry name" value="Small_GTP-bd"/>
</dbReference>
<dbReference type="NCBIfam" id="TIGR00436">
    <property type="entry name" value="era"/>
    <property type="match status" value="1"/>
</dbReference>
<dbReference type="NCBIfam" id="NF000908">
    <property type="entry name" value="PRK00089.1"/>
    <property type="match status" value="1"/>
</dbReference>
<dbReference type="NCBIfam" id="TIGR00231">
    <property type="entry name" value="small_GTP"/>
    <property type="match status" value="1"/>
</dbReference>
<dbReference type="PANTHER" id="PTHR42698">
    <property type="entry name" value="GTPASE ERA"/>
    <property type="match status" value="1"/>
</dbReference>
<dbReference type="PANTHER" id="PTHR42698:SF1">
    <property type="entry name" value="GTPASE ERA, MITOCHONDRIAL"/>
    <property type="match status" value="1"/>
</dbReference>
<dbReference type="Pfam" id="PF07650">
    <property type="entry name" value="KH_2"/>
    <property type="match status" value="1"/>
</dbReference>
<dbReference type="Pfam" id="PF01926">
    <property type="entry name" value="MMR_HSR1"/>
    <property type="match status" value="1"/>
</dbReference>
<dbReference type="SUPFAM" id="SSF52540">
    <property type="entry name" value="P-loop containing nucleoside triphosphate hydrolases"/>
    <property type="match status" value="1"/>
</dbReference>
<dbReference type="SUPFAM" id="SSF54814">
    <property type="entry name" value="Prokaryotic type KH domain (KH-domain type II)"/>
    <property type="match status" value="1"/>
</dbReference>
<dbReference type="PROSITE" id="PS51713">
    <property type="entry name" value="G_ERA"/>
    <property type="match status" value="1"/>
</dbReference>
<dbReference type="PROSITE" id="PS50823">
    <property type="entry name" value="KH_TYPE_2"/>
    <property type="match status" value="1"/>
</dbReference>
<protein>
    <recommendedName>
        <fullName evidence="1">GTPase Era</fullName>
    </recommendedName>
</protein>
<feature type="chain" id="PRO_1000079731" description="GTPase Era">
    <location>
        <begin position="1"/>
        <end position="301"/>
    </location>
</feature>
<feature type="domain" description="Era-type G" evidence="2">
    <location>
        <begin position="7"/>
        <end position="175"/>
    </location>
</feature>
<feature type="domain" description="KH type-2" evidence="1">
    <location>
        <begin position="206"/>
        <end position="283"/>
    </location>
</feature>
<feature type="region of interest" description="G1" evidence="2">
    <location>
        <begin position="15"/>
        <end position="22"/>
    </location>
</feature>
<feature type="region of interest" description="G2" evidence="2">
    <location>
        <begin position="41"/>
        <end position="45"/>
    </location>
</feature>
<feature type="region of interest" description="G3" evidence="2">
    <location>
        <begin position="62"/>
        <end position="65"/>
    </location>
</feature>
<feature type="region of interest" description="G4" evidence="2">
    <location>
        <begin position="124"/>
        <end position="127"/>
    </location>
</feature>
<feature type="region of interest" description="G5" evidence="2">
    <location>
        <begin position="154"/>
        <end position="156"/>
    </location>
</feature>
<feature type="binding site" evidence="1">
    <location>
        <begin position="15"/>
        <end position="22"/>
    </location>
    <ligand>
        <name>GTP</name>
        <dbReference type="ChEBI" id="CHEBI:37565"/>
    </ligand>
</feature>
<feature type="binding site" evidence="1">
    <location>
        <begin position="62"/>
        <end position="66"/>
    </location>
    <ligand>
        <name>GTP</name>
        <dbReference type="ChEBI" id="CHEBI:37565"/>
    </ligand>
</feature>
<feature type="binding site" evidence="1">
    <location>
        <begin position="124"/>
        <end position="127"/>
    </location>
    <ligand>
        <name>GTP</name>
        <dbReference type="ChEBI" id="CHEBI:37565"/>
    </ligand>
</feature>
<organism>
    <name type="scientific">Salmonella choleraesuis (strain SC-B67)</name>
    <dbReference type="NCBI Taxonomy" id="321314"/>
    <lineage>
        <taxon>Bacteria</taxon>
        <taxon>Pseudomonadati</taxon>
        <taxon>Pseudomonadota</taxon>
        <taxon>Gammaproteobacteria</taxon>
        <taxon>Enterobacterales</taxon>
        <taxon>Enterobacteriaceae</taxon>
        <taxon>Salmonella</taxon>
    </lineage>
</organism>
<sequence length="301" mass="33854">MSTDKTYCGFIAIVGRPNVGKSTLLNKLLGQKISITSRKAQTTRHRIVGIHTEGPYQAIYVDTPGLHMEEKRAINRLMNKAASSSIGDVELVIFVVEGTRWTPDDEMVLNKLRDGKAPVILAVNKVDNVQEKADLLPHLQFLASQMNFLDIVPISAETGMNVDTIAGIVRKHLPEAIHHFPEDYITDRSQRFMASEIIREKLMRFLGAELPYSVTVEIERFVTNERGGYDINGLILVEREGQKKMVIGNKGAKIKTIGIEARKDMQEMFEAPVHLELWVKVKSGWADDERALRSLGYVDDL</sequence>
<reference key="1">
    <citation type="journal article" date="2005" name="Nucleic Acids Res.">
        <title>The genome sequence of Salmonella enterica serovar Choleraesuis, a highly invasive and resistant zoonotic pathogen.</title>
        <authorList>
            <person name="Chiu C.-H."/>
            <person name="Tang P."/>
            <person name="Chu C."/>
            <person name="Hu S."/>
            <person name="Bao Q."/>
            <person name="Yu J."/>
            <person name="Chou Y.-Y."/>
            <person name="Wang H.-S."/>
            <person name="Lee Y.-S."/>
        </authorList>
    </citation>
    <scope>NUCLEOTIDE SEQUENCE [LARGE SCALE GENOMIC DNA]</scope>
    <source>
        <strain>SC-B67</strain>
    </source>
</reference>
<proteinExistence type="inferred from homology"/>
<evidence type="ECO:0000255" key="1">
    <source>
        <dbReference type="HAMAP-Rule" id="MF_00367"/>
    </source>
</evidence>
<evidence type="ECO:0000255" key="2">
    <source>
        <dbReference type="PROSITE-ProRule" id="PRU01050"/>
    </source>
</evidence>